<accession>Q6DID5</accession>
<accession>Q3TCZ4</accession>
<accession>Q6NST9</accession>
<accession>Q8C5E3</accession>
<accession>Q8R1V6</accession>
<accession>Q9R1R7</accession>
<name>PWP3A_MOUSE</name>
<organism>
    <name type="scientific">Mus musculus</name>
    <name type="common">Mouse</name>
    <dbReference type="NCBI Taxonomy" id="10090"/>
    <lineage>
        <taxon>Eukaryota</taxon>
        <taxon>Metazoa</taxon>
        <taxon>Chordata</taxon>
        <taxon>Craniata</taxon>
        <taxon>Vertebrata</taxon>
        <taxon>Euteleostomi</taxon>
        <taxon>Mammalia</taxon>
        <taxon>Eutheria</taxon>
        <taxon>Euarchontoglires</taxon>
        <taxon>Glires</taxon>
        <taxon>Rodentia</taxon>
        <taxon>Myomorpha</taxon>
        <taxon>Muroidea</taxon>
        <taxon>Muridae</taxon>
        <taxon>Murinae</taxon>
        <taxon>Mus</taxon>
        <taxon>Mus</taxon>
    </lineage>
</organism>
<gene>
    <name type="primary">Pwwp3a</name>
    <name evidence="5" type="synonym">Mum1</name>
</gene>
<feature type="chain" id="PRO_0000295047" description="PWWP domain-containing DNA repair factor 3A">
    <location>
        <begin position="1"/>
        <end position="682"/>
    </location>
</feature>
<feature type="domain" description="PWWP">
    <location>
        <begin position="383"/>
        <end position="444"/>
    </location>
</feature>
<feature type="region of interest" description="Disordered" evidence="3">
    <location>
        <begin position="121"/>
        <end position="145"/>
    </location>
</feature>
<feature type="region of interest" description="Disordered" evidence="3">
    <location>
        <begin position="179"/>
        <end position="318"/>
    </location>
</feature>
<feature type="region of interest" description="Disordered" evidence="3">
    <location>
        <begin position="334"/>
        <end position="369"/>
    </location>
</feature>
<feature type="compositionally biased region" description="Low complexity" evidence="3">
    <location>
        <begin position="127"/>
        <end position="140"/>
    </location>
</feature>
<feature type="compositionally biased region" description="Basic and acidic residues" evidence="3">
    <location>
        <begin position="203"/>
        <end position="220"/>
    </location>
</feature>
<feature type="compositionally biased region" description="Polar residues" evidence="3">
    <location>
        <begin position="346"/>
        <end position="357"/>
    </location>
</feature>
<feature type="modified residue" description="Phosphoserine" evidence="6">
    <location>
        <position position="105"/>
    </location>
</feature>
<feature type="modified residue" description="Phosphoserine" evidence="2">
    <location>
        <position position="168"/>
    </location>
</feature>
<feature type="modified residue" description="Phosphoserine" evidence="6">
    <location>
        <position position="345"/>
    </location>
</feature>
<feature type="modified residue" description="Phosphoserine" evidence="6">
    <location>
        <position position="346"/>
    </location>
</feature>
<feature type="sequence conflict" description="In Ref. 1; BAC37397." evidence="4" ref="1">
    <original>L</original>
    <variation>M</variation>
    <location>
        <position position="59"/>
    </location>
</feature>
<feature type="sequence conflict" description="In Ref. 3; BAA82658." evidence="4" ref="3">
    <original>L</original>
    <variation>Q</variation>
    <location>
        <position position="374"/>
    </location>
</feature>
<feature type="sequence conflict" description="In Ref. 2; AAH69883." evidence="4" ref="2">
    <original>VVKSVRR</original>
    <variation>PTRPVRP</variation>
    <location>
        <begin position="400"/>
        <end position="406"/>
    </location>
</feature>
<proteinExistence type="evidence at protein level"/>
<reference key="1">
    <citation type="journal article" date="2005" name="Science">
        <title>The transcriptional landscape of the mammalian genome.</title>
        <authorList>
            <person name="Carninci P."/>
            <person name="Kasukawa T."/>
            <person name="Katayama S."/>
            <person name="Gough J."/>
            <person name="Frith M.C."/>
            <person name="Maeda N."/>
            <person name="Oyama R."/>
            <person name="Ravasi T."/>
            <person name="Lenhard B."/>
            <person name="Wells C."/>
            <person name="Kodzius R."/>
            <person name="Shimokawa K."/>
            <person name="Bajic V.B."/>
            <person name="Brenner S.E."/>
            <person name="Batalov S."/>
            <person name="Forrest A.R."/>
            <person name="Zavolan M."/>
            <person name="Davis M.J."/>
            <person name="Wilming L.G."/>
            <person name="Aidinis V."/>
            <person name="Allen J.E."/>
            <person name="Ambesi-Impiombato A."/>
            <person name="Apweiler R."/>
            <person name="Aturaliya R.N."/>
            <person name="Bailey T.L."/>
            <person name="Bansal M."/>
            <person name="Baxter L."/>
            <person name="Beisel K.W."/>
            <person name="Bersano T."/>
            <person name="Bono H."/>
            <person name="Chalk A.M."/>
            <person name="Chiu K.P."/>
            <person name="Choudhary V."/>
            <person name="Christoffels A."/>
            <person name="Clutterbuck D.R."/>
            <person name="Crowe M.L."/>
            <person name="Dalla E."/>
            <person name="Dalrymple B.P."/>
            <person name="de Bono B."/>
            <person name="Della Gatta G."/>
            <person name="di Bernardo D."/>
            <person name="Down T."/>
            <person name="Engstrom P."/>
            <person name="Fagiolini M."/>
            <person name="Faulkner G."/>
            <person name="Fletcher C.F."/>
            <person name="Fukushima T."/>
            <person name="Furuno M."/>
            <person name="Futaki S."/>
            <person name="Gariboldi M."/>
            <person name="Georgii-Hemming P."/>
            <person name="Gingeras T.R."/>
            <person name="Gojobori T."/>
            <person name="Green R.E."/>
            <person name="Gustincich S."/>
            <person name="Harbers M."/>
            <person name="Hayashi Y."/>
            <person name="Hensch T.K."/>
            <person name="Hirokawa N."/>
            <person name="Hill D."/>
            <person name="Huminiecki L."/>
            <person name="Iacono M."/>
            <person name="Ikeo K."/>
            <person name="Iwama A."/>
            <person name="Ishikawa T."/>
            <person name="Jakt M."/>
            <person name="Kanapin A."/>
            <person name="Katoh M."/>
            <person name="Kawasawa Y."/>
            <person name="Kelso J."/>
            <person name="Kitamura H."/>
            <person name="Kitano H."/>
            <person name="Kollias G."/>
            <person name="Krishnan S.P."/>
            <person name="Kruger A."/>
            <person name="Kummerfeld S.K."/>
            <person name="Kurochkin I.V."/>
            <person name="Lareau L.F."/>
            <person name="Lazarevic D."/>
            <person name="Lipovich L."/>
            <person name="Liu J."/>
            <person name="Liuni S."/>
            <person name="McWilliam S."/>
            <person name="Madan Babu M."/>
            <person name="Madera M."/>
            <person name="Marchionni L."/>
            <person name="Matsuda H."/>
            <person name="Matsuzawa S."/>
            <person name="Miki H."/>
            <person name="Mignone F."/>
            <person name="Miyake S."/>
            <person name="Morris K."/>
            <person name="Mottagui-Tabar S."/>
            <person name="Mulder N."/>
            <person name="Nakano N."/>
            <person name="Nakauchi H."/>
            <person name="Ng P."/>
            <person name="Nilsson R."/>
            <person name="Nishiguchi S."/>
            <person name="Nishikawa S."/>
            <person name="Nori F."/>
            <person name="Ohara O."/>
            <person name="Okazaki Y."/>
            <person name="Orlando V."/>
            <person name="Pang K.C."/>
            <person name="Pavan W.J."/>
            <person name="Pavesi G."/>
            <person name="Pesole G."/>
            <person name="Petrovsky N."/>
            <person name="Piazza S."/>
            <person name="Reed J."/>
            <person name="Reid J.F."/>
            <person name="Ring B.Z."/>
            <person name="Ringwald M."/>
            <person name="Rost B."/>
            <person name="Ruan Y."/>
            <person name="Salzberg S.L."/>
            <person name="Sandelin A."/>
            <person name="Schneider C."/>
            <person name="Schoenbach C."/>
            <person name="Sekiguchi K."/>
            <person name="Semple C.A."/>
            <person name="Seno S."/>
            <person name="Sessa L."/>
            <person name="Sheng Y."/>
            <person name="Shibata Y."/>
            <person name="Shimada H."/>
            <person name="Shimada K."/>
            <person name="Silva D."/>
            <person name="Sinclair B."/>
            <person name="Sperling S."/>
            <person name="Stupka E."/>
            <person name="Sugiura K."/>
            <person name="Sultana R."/>
            <person name="Takenaka Y."/>
            <person name="Taki K."/>
            <person name="Tammoja K."/>
            <person name="Tan S.L."/>
            <person name="Tang S."/>
            <person name="Taylor M.S."/>
            <person name="Tegner J."/>
            <person name="Teichmann S.A."/>
            <person name="Ueda H.R."/>
            <person name="van Nimwegen E."/>
            <person name="Verardo R."/>
            <person name="Wei C.L."/>
            <person name="Yagi K."/>
            <person name="Yamanishi H."/>
            <person name="Zabarovsky E."/>
            <person name="Zhu S."/>
            <person name="Zimmer A."/>
            <person name="Hide W."/>
            <person name="Bult C."/>
            <person name="Grimmond S.M."/>
            <person name="Teasdale R.D."/>
            <person name="Liu E.T."/>
            <person name="Brusic V."/>
            <person name="Quackenbush J."/>
            <person name="Wahlestedt C."/>
            <person name="Mattick J.S."/>
            <person name="Hume D.A."/>
            <person name="Kai C."/>
            <person name="Sasaki D."/>
            <person name="Tomaru Y."/>
            <person name="Fukuda S."/>
            <person name="Kanamori-Katayama M."/>
            <person name="Suzuki M."/>
            <person name="Aoki J."/>
            <person name="Arakawa T."/>
            <person name="Iida J."/>
            <person name="Imamura K."/>
            <person name="Itoh M."/>
            <person name="Kato T."/>
            <person name="Kawaji H."/>
            <person name="Kawagashira N."/>
            <person name="Kawashima T."/>
            <person name="Kojima M."/>
            <person name="Kondo S."/>
            <person name="Konno H."/>
            <person name="Nakano K."/>
            <person name="Ninomiya N."/>
            <person name="Nishio T."/>
            <person name="Okada M."/>
            <person name="Plessy C."/>
            <person name="Shibata K."/>
            <person name="Shiraki T."/>
            <person name="Suzuki S."/>
            <person name="Tagami M."/>
            <person name="Waki K."/>
            <person name="Watahiki A."/>
            <person name="Okamura-Oho Y."/>
            <person name="Suzuki H."/>
            <person name="Kawai J."/>
            <person name="Hayashizaki Y."/>
        </authorList>
    </citation>
    <scope>NUCLEOTIDE SEQUENCE [LARGE SCALE MRNA]</scope>
    <source>
        <strain>C57BL/6J</strain>
        <strain>NOD</strain>
        <tissue>Testis</tissue>
        <tissue>Visual cortex</tissue>
    </source>
</reference>
<reference key="2">
    <citation type="journal article" date="2004" name="Genome Res.">
        <title>The status, quality, and expansion of the NIH full-length cDNA project: the Mammalian Gene Collection (MGC).</title>
        <authorList>
            <consortium name="The MGC Project Team"/>
        </authorList>
    </citation>
    <scope>NUCLEOTIDE SEQUENCE [LARGE SCALE MRNA]</scope>
    <source>
        <strain>C57BL/6J</strain>
        <strain>FVB/N</strain>
        <tissue>Brain</tissue>
        <tissue>Eye</tissue>
        <tissue>Salivary gland</tissue>
    </source>
</reference>
<reference key="3">
    <citation type="submission" date="1999-07" db="EMBL/GenBank/DDBJ databases">
        <title>Ubiquitously expressing genes.</title>
        <authorList>
            <person name="Goto M."/>
            <person name="Eddy E.M."/>
        </authorList>
    </citation>
    <scope>NUCLEOTIDE SEQUENCE [MRNA] OF 276-682</scope>
    <source>
        <strain>CD-1</strain>
        <tissue>Testis</tissue>
    </source>
</reference>
<reference key="4">
    <citation type="journal article" date="2010" name="Cell">
        <title>A tissue-specific atlas of mouse protein phosphorylation and expression.</title>
        <authorList>
            <person name="Huttlin E.L."/>
            <person name="Jedrychowski M.P."/>
            <person name="Elias J.E."/>
            <person name="Goswami T."/>
            <person name="Rad R."/>
            <person name="Beausoleil S.A."/>
            <person name="Villen J."/>
            <person name="Haas W."/>
            <person name="Sowa M.E."/>
            <person name="Gygi S.P."/>
        </authorList>
    </citation>
    <scope>PHOSPHORYLATION [LARGE SCALE ANALYSIS] AT SER-105; SER-345 AND SER-346</scope>
    <scope>IDENTIFICATION BY MASS SPECTROMETRY [LARGE SCALE ANALYSIS]</scope>
    <source>
        <tissue>Testis</tissue>
    </source>
</reference>
<comment type="function">
    <text evidence="1">Involved in the DNA damage response pathway by contributing to the maintenance of chromatin architecture. Recruited to the vicinity of DNA breaks by TP53BP1 and plays an accessory role to facilitate damage-induced chromatin changes and promoting chromatin relaxation. Required for efficient DNA repair and cell survival following DNA damage (By similarity).</text>
</comment>
<comment type="subunit">
    <text evidence="1">Interacts with TP53BP1 (via BRCT domain); the interaction is not dependent on its phosphorylation status. Binds nucleosomes. Interacts with trimethylated 'Lys-36' of histone H3 (H3K36me3) (in vitro) (By similarity).</text>
</comment>
<comment type="subcellular location">
    <subcellularLocation>
        <location evidence="1">Nucleus</location>
    </subcellularLocation>
    <text evidence="1">Recruited to DNA damage sites via its interaction with the BRCT domain of TP53BP1.</text>
</comment>
<comment type="domain">
    <text>The PWWP domain mediates the interaction with nucleosomes.</text>
</comment>
<comment type="similarity">
    <text evidence="4">Belongs to the PWWP3A family.</text>
</comment>
<comment type="sequence caution" evidence="4">
    <conflict type="erroneous initiation">
        <sequence resource="EMBL-CDS" id="AAH23031"/>
    </conflict>
    <text>Truncated N-terminus.</text>
</comment>
<comment type="sequence caution" evidence="4">
    <conflict type="frameshift">
        <sequence resource="EMBL-CDS" id="BAA82658"/>
    </conflict>
</comment>
<comment type="sequence caution" evidence="4">
    <conflict type="miscellaneous discrepancy">
        <sequence resource="EMBL-CDS" id="BAC37397"/>
    </conflict>
    <text>Intron retention. This sequence is incomplete at the 5'-end.</text>
</comment>
<sequence>MTDAKYVLCRWGKRLWPAKVLARTETSAKNKKKKEFFLDVQILSLKEKIQVKSSAVEALQKSHIENIAAFLASQNEVPATPLEELTYRRSLRVALDVLNERTSLSPESHPIEDGITLSQKEKTDADVASQVSSAPSPSLLGEDGQAVVAQCASKRRSEYSSKSLLPSSALEDHLRCQVGPKTGLSESGAGDKSQDDSGLQLDHGQESTTKKRQRNLGEKPTRRRRSESGLSKGESVLKSQGQASSCVALASPRPPSQTRDEEPCAGVKGCDWVKSSGNIRPLSASERSRGCPTKRPRLDGGQNPPTRQLGTRTVGAAPCPRSCSGEVTMLCSAGAGDKPEEDPVSSEESTGFKSTHSLLEEEEEEEEEPPRILLYHEPRSFEVGMLVWLKYQKYPFWPAVVKSVRRRDKKASVLFIEGNMNPKGRGITVSLRRLKHFDCKEKHALLDRAKEDFAQAIGWCVSLITDYRVRLGCGSFAGSFLEYYAADISYPVRKSIQQDVLGTRFPQLGKGDPEEPVGDSQLGQWRPCRKVLPDRSRAARDRANQKLVEYIVKAKGAESHLRAILHSRKPSRWLKTFLSSSQCVTCMETYLEDEAQLDEVVEYLQGVCRDMDGQVPERGSGDRIRFILDVLLPEAIICAISAVEAVDYKTAEQKYIRGPTLSYREKEIFDNELLEERNRRRR</sequence>
<evidence type="ECO:0000250" key="1"/>
<evidence type="ECO:0000250" key="2">
    <source>
        <dbReference type="UniProtKB" id="B1H224"/>
    </source>
</evidence>
<evidence type="ECO:0000256" key="3">
    <source>
        <dbReference type="SAM" id="MobiDB-lite"/>
    </source>
</evidence>
<evidence type="ECO:0000305" key="4"/>
<evidence type="ECO:0000312" key="5">
    <source>
        <dbReference type="MGI" id="MGI:1915364"/>
    </source>
</evidence>
<evidence type="ECO:0007744" key="6">
    <source>
    </source>
</evidence>
<protein>
    <recommendedName>
        <fullName evidence="4">PWWP domain-containing DNA repair factor 3A</fullName>
        <shortName evidence="4">PWWP3A</shortName>
    </recommendedName>
    <alternativeName>
        <fullName>Mutated melanoma-associated antigen 1</fullName>
        <shortName>MUM-1</shortName>
    </alternativeName>
    <alternativeName>
        <fullName>PWWP domain-containing protein MUM1</fullName>
    </alternativeName>
</protein>
<keyword id="KW-0227">DNA damage</keyword>
<keyword id="KW-0234">DNA repair</keyword>
<keyword id="KW-0539">Nucleus</keyword>
<keyword id="KW-0597">Phosphoprotein</keyword>
<keyword id="KW-1185">Reference proteome</keyword>
<dbReference type="EMBL" id="AK078792">
    <property type="protein sequence ID" value="BAC37397.1"/>
    <property type="status" value="ALT_SEQ"/>
    <property type="molecule type" value="mRNA"/>
</dbReference>
<dbReference type="EMBL" id="AK158750">
    <property type="protein sequence ID" value="BAE34640.1"/>
    <property type="molecule type" value="mRNA"/>
</dbReference>
<dbReference type="EMBL" id="AK170459">
    <property type="protein sequence ID" value="BAE41811.1"/>
    <property type="molecule type" value="mRNA"/>
</dbReference>
<dbReference type="EMBL" id="BC023031">
    <property type="protein sequence ID" value="AAH23031.1"/>
    <property type="status" value="ALT_INIT"/>
    <property type="molecule type" value="mRNA"/>
</dbReference>
<dbReference type="EMBL" id="BC069883">
    <property type="protein sequence ID" value="AAH69883.1"/>
    <property type="molecule type" value="mRNA"/>
</dbReference>
<dbReference type="EMBL" id="BC075617">
    <property type="protein sequence ID" value="AAH75617.1"/>
    <property type="molecule type" value="mRNA"/>
</dbReference>
<dbReference type="EMBL" id="AB030505">
    <property type="protein sequence ID" value="BAA82658.1"/>
    <property type="status" value="ALT_FRAME"/>
    <property type="molecule type" value="mRNA"/>
</dbReference>
<dbReference type="CCDS" id="CCDS24014.1"/>
<dbReference type="RefSeq" id="NP_075920.4">
    <property type="nucleotide sequence ID" value="NM_023431.5"/>
</dbReference>
<dbReference type="RefSeq" id="XP_006514088.1">
    <property type="nucleotide sequence ID" value="XM_006514025.3"/>
</dbReference>
<dbReference type="RefSeq" id="XP_030101106.1">
    <property type="nucleotide sequence ID" value="XM_030245246.1"/>
</dbReference>
<dbReference type="SMR" id="Q6DID5"/>
<dbReference type="FunCoup" id="Q6DID5">
    <property type="interactions" value="3082"/>
</dbReference>
<dbReference type="IntAct" id="Q6DID5">
    <property type="interactions" value="1"/>
</dbReference>
<dbReference type="MINT" id="Q6DID5"/>
<dbReference type="STRING" id="10090.ENSMUSP00000020365"/>
<dbReference type="iPTMnet" id="Q6DID5"/>
<dbReference type="PhosphoSitePlus" id="Q6DID5"/>
<dbReference type="SwissPalm" id="Q6DID5"/>
<dbReference type="jPOST" id="Q6DID5"/>
<dbReference type="PaxDb" id="10090-ENSMUSP00000020365"/>
<dbReference type="PeptideAtlas" id="Q6DID5"/>
<dbReference type="ProteomicsDB" id="287640"/>
<dbReference type="Pumba" id="Q6DID5"/>
<dbReference type="Antibodypedia" id="10456">
    <property type="antibodies" value="278 antibodies from 36 providers"/>
</dbReference>
<dbReference type="Ensembl" id="ENSMUST00000020365.15">
    <property type="protein sequence ID" value="ENSMUSP00000020365.9"/>
    <property type="gene ID" value="ENSMUSG00000020156.17"/>
</dbReference>
<dbReference type="GeneID" id="68114"/>
<dbReference type="KEGG" id="mmu:68114"/>
<dbReference type="UCSC" id="uc007gch.1">
    <property type="organism name" value="mouse"/>
</dbReference>
<dbReference type="AGR" id="MGI:1915364"/>
<dbReference type="CTD" id="84939"/>
<dbReference type="MGI" id="MGI:1915364">
    <property type="gene designation" value="Pwwp3a"/>
</dbReference>
<dbReference type="VEuPathDB" id="HostDB:ENSMUSG00000020156"/>
<dbReference type="eggNOG" id="ENOG502QPRU">
    <property type="taxonomic scope" value="Eukaryota"/>
</dbReference>
<dbReference type="GeneTree" id="ENSGT00390000001700"/>
<dbReference type="HOGENOM" id="CLU_388271_0_0_1"/>
<dbReference type="InParanoid" id="Q6DID5"/>
<dbReference type="OMA" id="PPWAHRC"/>
<dbReference type="OrthoDB" id="10013064at2759"/>
<dbReference type="PhylomeDB" id="Q6DID5"/>
<dbReference type="TreeFam" id="TF328774"/>
<dbReference type="BioGRID-ORCS" id="68114">
    <property type="hits" value="5 hits in 117 CRISPR screens"/>
</dbReference>
<dbReference type="ChiTaRS" id="Mum1">
    <property type="organism name" value="mouse"/>
</dbReference>
<dbReference type="PRO" id="PR:Q6DID5"/>
<dbReference type="Proteomes" id="UP000000589">
    <property type="component" value="Chromosome 10"/>
</dbReference>
<dbReference type="RNAct" id="Q6DID5">
    <property type="molecule type" value="protein"/>
</dbReference>
<dbReference type="Bgee" id="ENSMUSG00000020156">
    <property type="expression patterns" value="Expressed in spermatocyte and 268 other cell types or tissues"/>
</dbReference>
<dbReference type="ExpressionAtlas" id="Q6DID5">
    <property type="expression patterns" value="baseline and differential"/>
</dbReference>
<dbReference type="GO" id="GO:0005829">
    <property type="term" value="C:cytosol"/>
    <property type="evidence" value="ECO:0007669"/>
    <property type="project" value="Ensembl"/>
</dbReference>
<dbReference type="GO" id="GO:0005654">
    <property type="term" value="C:nucleoplasm"/>
    <property type="evidence" value="ECO:0007669"/>
    <property type="project" value="Ensembl"/>
</dbReference>
<dbReference type="GO" id="GO:0005634">
    <property type="term" value="C:nucleus"/>
    <property type="evidence" value="ECO:0000250"/>
    <property type="project" value="UniProtKB"/>
</dbReference>
<dbReference type="GO" id="GO:0031491">
    <property type="term" value="F:nucleosome binding"/>
    <property type="evidence" value="ECO:0000250"/>
    <property type="project" value="UniProtKB"/>
</dbReference>
<dbReference type="GO" id="GO:0006325">
    <property type="term" value="P:chromatin organization"/>
    <property type="evidence" value="ECO:0000250"/>
    <property type="project" value="UniProtKB"/>
</dbReference>
<dbReference type="GO" id="GO:0006281">
    <property type="term" value="P:DNA repair"/>
    <property type="evidence" value="ECO:0000250"/>
    <property type="project" value="UniProtKB"/>
</dbReference>
<dbReference type="CDD" id="cd06080">
    <property type="entry name" value="PWWP_MUM1-like"/>
    <property type="match status" value="1"/>
</dbReference>
<dbReference type="FunFam" id="2.30.30.140:FF:000063">
    <property type="entry name" value="PWWP domain-containing DNA repair factor 3A"/>
    <property type="match status" value="1"/>
</dbReference>
<dbReference type="Gene3D" id="2.30.30.140">
    <property type="match status" value="1"/>
</dbReference>
<dbReference type="Gene3D" id="6.10.300.20">
    <property type="match status" value="1"/>
</dbReference>
<dbReference type="InterPro" id="IPR035504">
    <property type="entry name" value="MUM1-like_PWWP"/>
</dbReference>
<dbReference type="InterPro" id="IPR040263">
    <property type="entry name" value="PWP3A_3B_4"/>
</dbReference>
<dbReference type="InterPro" id="IPR048795">
    <property type="entry name" value="PWP3A_3B_4_C"/>
</dbReference>
<dbReference type="InterPro" id="IPR048765">
    <property type="entry name" value="PWP3A_3B_4_N"/>
</dbReference>
<dbReference type="PANTHER" id="PTHR31333">
    <property type="entry name" value="PWWP DOMAIN-CONTAINING DNA REPAIR FACTOR 3 FAMILY MEMBER"/>
    <property type="match status" value="1"/>
</dbReference>
<dbReference type="PANTHER" id="PTHR31333:SF4">
    <property type="entry name" value="PWWP DOMAIN-CONTAINING DNA REPAIR FACTOR 3A"/>
    <property type="match status" value="1"/>
</dbReference>
<dbReference type="Pfam" id="PF20884">
    <property type="entry name" value="MUM1-like_PWWP"/>
    <property type="match status" value="1"/>
</dbReference>
<dbReference type="Pfam" id="PF20886">
    <property type="entry name" value="PWP3A-B_C"/>
    <property type="match status" value="1"/>
</dbReference>
<dbReference type="Pfam" id="PF20887">
    <property type="entry name" value="PWP3A-B_N"/>
    <property type="match status" value="1"/>
</dbReference>
<dbReference type="SUPFAM" id="SSF63748">
    <property type="entry name" value="Tudor/PWWP/MBT"/>
    <property type="match status" value="1"/>
</dbReference>